<accession>B3MLI0</accession>
<feature type="chain" id="PRO_0000379007" description="FHIP family protein GF15501">
    <location>
        <begin position="1"/>
        <end position="1041"/>
    </location>
</feature>
<feature type="region of interest" description="Disordered" evidence="2">
    <location>
        <begin position="797"/>
        <end position="856"/>
    </location>
</feature>
<feature type="region of interest" description="Disordered" evidence="2">
    <location>
        <begin position="907"/>
        <end position="987"/>
    </location>
</feature>
<feature type="compositionally biased region" description="Low complexity" evidence="2">
    <location>
        <begin position="808"/>
        <end position="824"/>
    </location>
</feature>
<feature type="compositionally biased region" description="Polar residues" evidence="2">
    <location>
        <begin position="825"/>
        <end position="843"/>
    </location>
</feature>
<feature type="compositionally biased region" description="Polar residues" evidence="2">
    <location>
        <begin position="907"/>
        <end position="933"/>
    </location>
</feature>
<feature type="compositionally biased region" description="Low complexity" evidence="2">
    <location>
        <begin position="942"/>
        <end position="973"/>
    </location>
</feature>
<feature type="modified residue" description="Phosphoserine" evidence="1">
    <location>
        <position position="803"/>
    </location>
</feature>
<comment type="similarity">
    <text evidence="3">Belongs to the FHIP family.</text>
</comment>
<protein>
    <recommendedName>
        <fullName>FHIP family protein GF15501</fullName>
    </recommendedName>
</protein>
<reference key="1">
    <citation type="journal article" date="2007" name="Nature">
        <title>Evolution of genes and genomes on the Drosophila phylogeny.</title>
        <authorList>
            <consortium name="Drosophila 12 genomes consortium"/>
        </authorList>
    </citation>
    <scope>NUCLEOTIDE SEQUENCE [LARGE SCALE GENOMIC DNA]</scope>
    <source>
        <strain>Tucson 14024-0371.13</strain>
    </source>
</reference>
<proteinExistence type="inferred from homology"/>
<organism>
    <name type="scientific">Drosophila ananassae</name>
    <name type="common">Fruit fly</name>
    <dbReference type="NCBI Taxonomy" id="7217"/>
    <lineage>
        <taxon>Eukaryota</taxon>
        <taxon>Metazoa</taxon>
        <taxon>Ecdysozoa</taxon>
        <taxon>Arthropoda</taxon>
        <taxon>Hexapoda</taxon>
        <taxon>Insecta</taxon>
        <taxon>Pterygota</taxon>
        <taxon>Neoptera</taxon>
        <taxon>Endopterygota</taxon>
        <taxon>Diptera</taxon>
        <taxon>Brachycera</taxon>
        <taxon>Muscomorpha</taxon>
        <taxon>Ephydroidea</taxon>
        <taxon>Drosophilidae</taxon>
        <taxon>Drosophila</taxon>
        <taxon>Sophophora</taxon>
    </lineage>
</organism>
<dbReference type="EMBL" id="CH902620">
    <property type="protein sequence ID" value="EDV31729.1"/>
    <property type="molecule type" value="Genomic_DNA"/>
</dbReference>
<dbReference type="RefSeq" id="XP_001962508.1">
    <property type="nucleotide sequence ID" value="XM_001962472.2"/>
</dbReference>
<dbReference type="SMR" id="B3MLI0"/>
<dbReference type="FunCoup" id="B3MLI0">
    <property type="interactions" value="67"/>
</dbReference>
<dbReference type="STRING" id="7217.B3MLI0"/>
<dbReference type="EnsemblMetazoa" id="FBtr0120201">
    <property type="protein sequence ID" value="FBpp0118693"/>
    <property type="gene ID" value="FBgn0092526"/>
</dbReference>
<dbReference type="KEGG" id="dan:6498309"/>
<dbReference type="eggNOG" id="KOG3695">
    <property type="taxonomic scope" value="Eukaryota"/>
</dbReference>
<dbReference type="HOGENOM" id="CLU_007807_0_0_1"/>
<dbReference type="InParanoid" id="B3MLI0"/>
<dbReference type="OMA" id="RMPSLVQ"/>
<dbReference type="OrthoDB" id="6287422at2759"/>
<dbReference type="PhylomeDB" id="B3MLI0"/>
<dbReference type="Proteomes" id="UP000007801">
    <property type="component" value="Unassembled WGS sequence"/>
</dbReference>
<dbReference type="InterPro" id="IPR019384">
    <property type="entry name" value="FHIP"/>
</dbReference>
<dbReference type="InterPro" id="IPR045669">
    <property type="entry name" value="FHIP_C"/>
</dbReference>
<dbReference type="InterPro" id="IPR045668">
    <property type="entry name" value="FHIP_KELAA_motif"/>
</dbReference>
<dbReference type="PANTHER" id="PTHR21705:SF11">
    <property type="entry name" value="FHIP FAMILY PROTEIN CG3558"/>
    <property type="match status" value="1"/>
</dbReference>
<dbReference type="PANTHER" id="PTHR21705">
    <property type="entry name" value="RAI16 PROTEIN-RELATED"/>
    <property type="match status" value="1"/>
</dbReference>
<dbReference type="Pfam" id="PF19314">
    <property type="entry name" value="DUF5917"/>
    <property type="match status" value="1"/>
</dbReference>
<dbReference type="Pfam" id="PF19311">
    <property type="entry name" value="KELAA"/>
    <property type="match status" value="1"/>
</dbReference>
<dbReference type="Pfam" id="PF10257">
    <property type="entry name" value="RAI16-like"/>
    <property type="match status" value="1"/>
</dbReference>
<gene>
    <name type="ORF">GF15501</name>
</gene>
<evidence type="ECO:0000250" key="1"/>
<evidence type="ECO:0000256" key="2">
    <source>
        <dbReference type="SAM" id="MobiDB-lite"/>
    </source>
</evidence>
<evidence type="ECO:0000305" key="3"/>
<name>U518_DROAN</name>
<keyword id="KW-0597">Phosphoprotein</keyword>
<keyword id="KW-1185">Reference proteome</keyword>
<sequence length="1041" mass="114255">MSWLRQGSSGGVASAGHSGNIRQRPIDAATDCDPRACYDSFCKHWQQAHEIIQHSAPPSHDDVLGVVSHLDYMVTLLLVELHHCNKVALPTTEASGPPAAPCLEYLLSENLLDKLYEWSCATGRYANAVRLEQLKLYELLVSHSRHQLLCHEPFLRPLLKILASSQGEIFPPDLEKRLVILLNQLCVVLMQNVHLLDLFFFSAQTQVQEQIQNGSVPPPKSGTTTNFIIFSLLIPYVHREGSLGHQARDALLLCMALSQKNSNIGTYIAQYSSICPLLVTGLGGLYSRLPNSIEISAIDWHRITPDDVTEIPELTLFMNALEFCNAVVQVAHEMIKQQLLDFMYQGFIVPVLGPAILQTLKGKHFQTNIDSQISAMSYLDLILRSITEPGLLRAFVRFLLDNEKFDGERILDALVERLNSPDANLCMVTLALFDTLLGLHCEDLMLELLLKFMLPGKHVPLSHRHKINKIDPYLSSSEFFLELSPDVMKRARDLAKPKAIQEHPVVGDIPSPVMSKTIGANWNYYGVHTGDSLYANIQAYLFEAHWRIAQCQKDCLKWANSYRYQKWPRHGQGRVQAHALDLARQFFSEYGGSGPVVASGETGEKQLDSLQSIGESSGYESFKWRPADEESEATETTLATTASEVELEHNSSSISSGLAASGRREPWRISHNNRNELVLTDLDFSEDLFAQGTVSLGPFLNAIWGKLQTFTSNSLYVNLHLTGLITRLAWYPLPLIHSLLLRSDIVITSDTPSFHQVLRILKQQIDAELPVTEDSLEIIDVARSSLIDREFRLVNTRKGNEGSPSHHNLQQQQALNPAQQQGQQRSAYATLSAATPVQATPTSAYDPFRRSDNKRRSISKSITSMFSRKSAPTAAASAAPANGSSASSGLSQIYAFFTGAASTLVGSNSSSESRGFAPGQQSAGTCETSLSTQPPRPTTIASGSSSNSSMGGSSQTLSAHSNATTTHSSSTLHGLDGGPPSFSSEPVSLDSVASMGIIASTSGTERSRDLALCAVLLDEWLKELAAIAQEQSVVLVTEQTL</sequence>